<dbReference type="EMBL" id="AY875684">
    <property type="protein sequence ID" value="AAW51783.1"/>
    <property type="molecule type" value="Genomic_DNA"/>
</dbReference>
<dbReference type="RefSeq" id="YP_239378.1">
    <property type="nucleotide sequence ID" value="NC_007034.1"/>
</dbReference>
<dbReference type="SMR" id="Q5I150"/>
<dbReference type="KEGG" id="vg:5075812"/>
<dbReference type="Proteomes" id="UP000008168">
    <property type="component" value="Genome"/>
</dbReference>
<name>YG2_MDBVW</name>
<gene>
    <name type="primary">G2</name>
</gene>
<sequence length="124" mass="13963">MAENSRYVRLDANGTEGIEEPNPSRRIRNKSILEKMLNSNDAESQQVAKRRRVEERPASSSNPDYVCINDVSINSPVTPIPASPSPAALDFPTISRRISQSLEKSRECVWISCGHRNFSRESFN</sequence>
<reference key="1">
    <citation type="journal article" date="2006" name="Virology">
        <title>Polydnavirus genomes reflect their dual roles as mutualists and pathogens.</title>
        <authorList>
            <person name="Webb B.A."/>
            <person name="Strand M.R."/>
            <person name="Dickey S.E."/>
            <person name="Beck M.H."/>
            <person name="Hilgarth R.S."/>
            <person name="Barney W.E."/>
            <person name="Kadash K."/>
            <person name="Kroemer J.A."/>
            <person name="Lindstrom K.G."/>
            <person name="Rattanadechakul W."/>
            <person name="Shelby K.S."/>
            <person name="Thoetkiattikul H."/>
            <person name="Turnbull M.W."/>
            <person name="Witherell R.A."/>
        </authorList>
    </citation>
    <scope>NUCLEOTIDE SEQUENCE [GENOMIC DNA]</scope>
</reference>
<protein>
    <recommendedName>
        <fullName>Uncharacterized protein G2</fullName>
    </recommendedName>
</protein>
<organismHost>
    <name type="scientific">Microplitis demolitor</name>
    <name type="common">Parasitoid wasp</name>
    <dbReference type="NCBI Taxonomy" id="69319"/>
</organismHost>
<keyword id="KW-1185">Reference proteome</keyword>
<accession>Q5I150</accession>
<organism>
    <name type="scientific">Microplitis demolitor bracovirus (isolate Webb)</name>
    <name type="common">MdBV</name>
    <dbReference type="NCBI Taxonomy" id="654919"/>
    <lineage>
        <taxon>Viruses</taxon>
        <taxon>Viruses incertae sedis</taxon>
        <taxon>Polydnaviriformidae</taxon>
        <taxon>Bracoviriform</taxon>
        <taxon>Microplitis demolitor bracovirus</taxon>
    </lineage>
</organism>
<feature type="chain" id="PRO_0000405398" description="Uncharacterized protein G2">
    <location>
        <begin position="1"/>
        <end position="124"/>
    </location>
</feature>
<feature type="region of interest" description="Disordered" evidence="1">
    <location>
        <begin position="1"/>
        <end position="65"/>
    </location>
</feature>
<feature type="compositionally biased region" description="Polar residues" evidence="1">
    <location>
        <begin position="37"/>
        <end position="47"/>
    </location>
</feature>
<proteinExistence type="predicted"/>
<evidence type="ECO:0000256" key="1">
    <source>
        <dbReference type="SAM" id="MobiDB-lite"/>
    </source>
</evidence>